<evidence type="ECO:0000250" key="1"/>
<evidence type="ECO:0000255" key="2"/>
<evidence type="ECO:0000255" key="3">
    <source>
        <dbReference type="PROSITE-ProRule" id="PRU00159"/>
    </source>
</evidence>
<evidence type="ECO:0000255" key="4">
    <source>
        <dbReference type="PROSITE-ProRule" id="PRU10028"/>
    </source>
</evidence>
<evidence type="ECO:0000269" key="5">
    <source>
    </source>
</evidence>
<evidence type="ECO:0000269" key="6">
    <source>
    </source>
</evidence>
<evidence type="ECO:0000269" key="7">
    <source>
    </source>
</evidence>
<evidence type="ECO:0000269" key="8">
    <source>
    </source>
</evidence>
<evidence type="ECO:0000269" key="9">
    <source>
    </source>
</evidence>
<evidence type="ECO:0000269" key="10">
    <source>
    </source>
</evidence>
<evidence type="ECO:0000269" key="11">
    <source>
    </source>
</evidence>
<evidence type="ECO:0000269" key="12">
    <source ref="6"/>
</evidence>
<evidence type="ECO:0000305" key="13"/>
<sequence length="422" mass="47577">MGMTRMLLECSLSDKLCVIQEKQYEVIIVPTLLVTIFLILLGVILWLFIREQRTQQQRSGPQGIAPVPPPRDLSWEAGHGGNVALPLKETSVENFLGATTPALAKLQVPREQLSEVLEQICSGSCGPIFRANMNTGDPSKPKSVILKALKEPAGLHEVQDFLGRIQFHQYLGKHKNLVQLEGCCTEKLPLYMVLEDVAQGDLLSFLWTCRRDVMTMDGLLYDLTEKQVYHIGKQVLLALEFLQEKHLFHGDVAARNILMQSDLTAKLCGLGLAYEVYTRGAISSTQTIPLKWLAPERLLLRPASIRADVWSFGILLYEMVTLGAPPYPEVPPTSILEHLQRRKIMKRPSSCTHTMYSIMKSCWRWREADRPSPRELRLRLEAAIKTADDEAVLQVPELVVPELYAAVAGIRVESLFYNYSML</sequence>
<accession>Q6J9G0</accession>
<accession>B2R9T2</accession>
<accession>Q52LR3</accession>
<accession>Q9BXY2</accession>
<accession>Q9NSH1</accession>
<feature type="chain" id="PRO_0000088163" description="Tyrosine-protein kinase STYK1">
    <location>
        <begin position="1"/>
        <end position="422"/>
    </location>
</feature>
<feature type="transmembrane region" description="Helical" evidence="2">
    <location>
        <begin position="26"/>
        <end position="46"/>
    </location>
</feature>
<feature type="domain" description="Protein kinase" evidence="3">
    <location>
        <begin position="114"/>
        <end position="384"/>
    </location>
</feature>
<feature type="active site" description="Proton acceptor" evidence="3 4">
    <location>
        <position position="251"/>
    </location>
</feature>
<feature type="binding site" evidence="3">
    <location>
        <begin position="120"/>
        <end position="128"/>
    </location>
    <ligand>
        <name>ATP</name>
        <dbReference type="ChEBI" id="CHEBI:30616"/>
    </ligand>
</feature>
<feature type="binding site" evidence="3">
    <location>
        <position position="147"/>
    </location>
    <ligand>
        <name>ATP</name>
        <dbReference type="ChEBI" id="CHEBI:30616"/>
    </ligand>
</feature>
<feature type="sequence variant" id="VAR_030766" description="In dbSNP:rs6650202.">
    <original>R</original>
    <variation>G</variation>
    <location>
        <position position="71"/>
    </location>
</feature>
<feature type="sequence variant" id="VAR_022245" description="In dbSNP:rs3759259." evidence="5 6 8 10 11 12">
    <original>S</original>
    <variation>G</variation>
    <location>
        <position position="204"/>
    </location>
</feature>
<feature type="sequence variant" id="VAR_041841" description="In dbSNP:rs34981955." evidence="10">
    <original>R</original>
    <variation>W</variation>
    <location>
        <position position="210"/>
    </location>
</feature>
<feature type="sequence variant" id="VAR_041842" description="In dbSNP:rs55877878." evidence="10">
    <original>L</original>
    <variation>S</variation>
    <location>
        <position position="237"/>
    </location>
</feature>
<feature type="sequence variant" id="VAR_041843" description="In dbSNP:rs34638573." evidence="10">
    <original>R</original>
    <variation>H</variation>
    <location>
        <position position="379"/>
    </location>
</feature>
<feature type="sequence variant" id="VAR_041844" description="In a glioblastoma multiforme sample; somatic mutation." evidence="10">
    <original>V</original>
    <variation>I</variation>
    <location>
        <position position="395"/>
    </location>
</feature>
<feature type="sequence variant" id="VAR_041845" description="In dbSNP:rs55766125." evidence="10">
    <original>V</original>
    <variation>L</variation>
    <location>
        <position position="400"/>
    </location>
</feature>
<feature type="sequence conflict" description="In Ref. 1; AAK34949 and 2; AAT01226." evidence="13" ref="1 2">
    <original>M</original>
    <variation>V</variation>
    <location>
        <position position="192"/>
    </location>
</feature>
<feature type="sequence conflict" description="In Ref. 1; AAK34949 and 2; AAT01226." evidence="13" ref="1 2">
    <original>S</original>
    <variation>R</variation>
    <location>
        <position position="304"/>
    </location>
</feature>
<protein>
    <recommendedName>
        <fullName>Tyrosine-protein kinase STYK1</fullName>
        <ecNumber>2.7.10.2</ecNumber>
    </recommendedName>
    <alternativeName>
        <fullName>Novel oncogene with kinase domain</fullName>
    </alternativeName>
    <alternativeName>
        <fullName>Protein PK-unique</fullName>
    </alternativeName>
    <alternativeName>
        <fullName>Serine/threonine/tyrosine kinase 1</fullName>
    </alternativeName>
</protein>
<dbReference type="EC" id="2.7.10.2"/>
<dbReference type="EMBL" id="AF251059">
    <property type="protein sequence ID" value="AAK34949.1"/>
    <property type="molecule type" value="mRNA"/>
</dbReference>
<dbReference type="EMBL" id="AY563054">
    <property type="protein sequence ID" value="AAT01226.1"/>
    <property type="molecule type" value="mRNA"/>
</dbReference>
<dbReference type="EMBL" id="AK313906">
    <property type="protein sequence ID" value="BAG36629.1"/>
    <property type="molecule type" value="mRNA"/>
</dbReference>
<dbReference type="EMBL" id="AL353940">
    <property type="protein sequence ID" value="CAB89250.1"/>
    <property type="molecule type" value="mRNA"/>
</dbReference>
<dbReference type="EMBL" id="AC021049">
    <property type="status" value="NOT_ANNOTATED_CDS"/>
    <property type="molecule type" value="Genomic_DNA"/>
</dbReference>
<dbReference type="EMBL" id="CH471094">
    <property type="protein sequence ID" value="EAW96200.1"/>
    <property type="molecule type" value="Genomic_DNA"/>
</dbReference>
<dbReference type="EMBL" id="BC093822">
    <property type="protein sequence ID" value="AAH93822.1"/>
    <property type="molecule type" value="mRNA"/>
</dbReference>
<dbReference type="EMBL" id="BC093824">
    <property type="protein sequence ID" value="AAH93824.1"/>
    <property type="molecule type" value="mRNA"/>
</dbReference>
<dbReference type="CCDS" id="CCDS8629.1"/>
<dbReference type="PIR" id="T48680">
    <property type="entry name" value="T48680"/>
</dbReference>
<dbReference type="RefSeq" id="NP_060893.2">
    <property type="nucleotide sequence ID" value="NM_018423.3"/>
</dbReference>
<dbReference type="RefSeq" id="XP_005253474.1">
    <property type="nucleotide sequence ID" value="XM_005253417.3"/>
</dbReference>
<dbReference type="RefSeq" id="XP_011519038.1">
    <property type="nucleotide sequence ID" value="XM_011520736.2"/>
</dbReference>
<dbReference type="RefSeq" id="XP_011519039.1">
    <property type="nucleotide sequence ID" value="XM_011520737.2"/>
</dbReference>
<dbReference type="RefSeq" id="XP_011519040.1">
    <property type="nucleotide sequence ID" value="XM_011520738.3"/>
</dbReference>
<dbReference type="SMR" id="Q6J9G0"/>
<dbReference type="BioGRID" id="120638">
    <property type="interactions" value="165"/>
</dbReference>
<dbReference type="FunCoup" id="Q6J9G0">
    <property type="interactions" value="710"/>
</dbReference>
<dbReference type="IntAct" id="Q6J9G0">
    <property type="interactions" value="150"/>
</dbReference>
<dbReference type="MINT" id="Q6J9G0"/>
<dbReference type="STRING" id="9606.ENSP00000075503"/>
<dbReference type="iPTMnet" id="Q6J9G0"/>
<dbReference type="PhosphoSitePlus" id="Q6J9G0"/>
<dbReference type="BioMuta" id="STYK1"/>
<dbReference type="DMDM" id="317373546"/>
<dbReference type="CPTAC" id="CPTAC-3013"/>
<dbReference type="CPTAC" id="CPTAC-3014"/>
<dbReference type="jPOST" id="Q6J9G0"/>
<dbReference type="MassIVE" id="Q6J9G0"/>
<dbReference type="PaxDb" id="9606-ENSP00000075503"/>
<dbReference type="PeptideAtlas" id="Q6J9G0"/>
<dbReference type="ProteomicsDB" id="66510"/>
<dbReference type="TopDownProteomics" id="Q6J9G0"/>
<dbReference type="Antibodypedia" id="23371">
    <property type="antibodies" value="327 antibodies from 34 providers"/>
</dbReference>
<dbReference type="DNASU" id="55359"/>
<dbReference type="Ensembl" id="ENST00000075503.8">
    <property type="protein sequence ID" value="ENSP00000075503.3"/>
    <property type="gene ID" value="ENSG00000060140.9"/>
</dbReference>
<dbReference type="GeneID" id="55359"/>
<dbReference type="KEGG" id="hsa:55359"/>
<dbReference type="MANE-Select" id="ENST00000075503.8">
    <property type="protein sequence ID" value="ENSP00000075503.3"/>
    <property type="RefSeq nucleotide sequence ID" value="NM_018423.3"/>
    <property type="RefSeq protein sequence ID" value="NP_060893.2"/>
</dbReference>
<dbReference type="UCSC" id="uc001qys.2">
    <property type="organism name" value="human"/>
</dbReference>
<dbReference type="AGR" id="HGNC:18889"/>
<dbReference type="CTD" id="55359"/>
<dbReference type="DisGeNET" id="55359"/>
<dbReference type="GeneCards" id="STYK1"/>
<dbReference type="HGNC" id="HGNC:18889">
    <property type="gene designation" value="STYK1"/>
</dbReference>
<dbReference type="HPA" id="ENSG00000060140">
    <property type="expression patterns" value="Tissue enhanced (intestine, stomach)"/>
</dbReference>
<dbReference type="MIM" id="611433">
    <property type="type" value="gene"/>
</dbReference>
<dbReference type="neXtProt" id="NX_Q6J9G0"/>
<dbReference type="OpenTargets" id="ENSG00000060140"/>
<dbReference type="PharmGKB" id="PA134976821"/>
<dbReference type="VEuPathDB" id="HostDB:ENSG00000060140"/>
<dbReference type="eggNOG" id="KOG0200">
    <property type="taxonomic scope" value="Eukaryota"/>
</dbReference>
<dbReference type="GeneTree" id="ENSGT00940000157871"/>
<dbReference type="HOGENOM" id="CLU_000288_7_7_1"/>
<dbReference type="InParanoid" id="Q6J9G0"/>
<dbReference type="OMA" id="SCCQWKE"/>
<dbReference type="OrthoDB" id="4062651at2759"/>
<dbReference type="PAN-GO" id="Q6J9G0">
    <property type="GO annotations" value="6 GO annotations based on evolutionary models"/>
</dbReference>
<dbReference type="PhylomeDB" id="Q6J9G0"/>
<dbReference type="TreeFam" id="TF316675"/>
<dbReference type="PathwayCommons" id="Q6J9G0"/>
<dbReference type="SignaLink" id="Q6J9G0"/>
<dbReference type="SIGNOR" id="Q6J9G0"/>
<dbReference type="BioGRID-ORCS" id="55359">
    <property type="hits" value="13 hits in 1180 CRISPR screens"/>
</dbReference>
<dbReference type="GeneWiki" id="STYK1"/>
<dbReference type="GenomeRNAi" id="55359"/>
<dbReference type="Pharos" id="Q6J9G0">
    <property type="development level" value="Tbio"/>
</dbReference>
<dbReference type="PRO" id="PR:Q6J9G0"/>
<dbReference type="Proteomes" id="UP000005640">
    <property type="component" value="Chromosome 12"/>
</dbReference>
<dbReference type="RNAct" id="Q6J9G0">
    <property type="molecule type" value="protein"/>
</dbReference>
<dbReference type="Bgee" id="ENSG00000060140">
    <property type="expression patterns" value="Expressed in endothelial cell and 156 other cell types or tissues"/>
</dbReference>
<dbReference type="ExpressionAtlas" id="Q6J9G0">
    <property type="expression patterns" value="baseline and differential"/>
</dbReference>
<dbReference type="GO" id="GO:0005886">
    <property type="term" value="C:plasma membrane"/>
    <property type="evidence" value="ECO:0000314"/>
    <property type="project" value="LIFEdb"/>
</dbReference>
<dbReference type="GO" id="GO:0005524">
    <property type="term" value="F:ATP binding"/>
    <property type="evidence" value="ECO:0007669"/>
    <property type="project" value="UniProtKB-KW"/>
</dbReference>
<dbReference type="GO" id="GO:0004715">
    <property type="term" value="F:non-membrane spanning protein tyrosine kinase activity"/>
    <property type="evidence" value="ECO:0000318"/>
    <property type="project" value="GO_Central"/>
</dbReference>
<dbReference type="FunFam" id="3.30.200.20:FF:000442">
    <property type="entry name" value="Serine/threonine/tyrosine kinase 1"/>
    <property type="match status" value="1"/>
</dbReference>
<dbReference type="FunFam" id="1.10.510.10:FF:000450">
    <property type="entry name" value="Tyrosine-protein kinase STYK1"/>
    <property type="match status" value="1"/>
</dbReference>
<dbReference type="Gene3D" id="3.30.200.20">
    <property type="entry name" value="Phosphorylase Kinase, domain 1"/>
    <property type="match status" value="1"/>
</dbReference>
<dbReference type="Gene3D" id="1.10.510.10">
    <property type="entry name" value="Transferase(Phosphotransferase) domain 1"/>
    <property type="match status" value="1"/>
</dbReference>
<dbReference type="InterPro" id="IPR011009">
    <property type="entry name" value="Kinase-like_dom_sf"/>
</dbReference>
<dbReference type="InterPro" id="IPR000719">
    <property type="entry name" value="Prot_kinase_dom"/>
</dbReference>
<dbReference type="InterPro" id="IPR050122">
    <property type="entry name" value="RTK"/>
</dbReference>
<dbReference type="InterPro" id="IPR001245">
    <property type="entry name" value="Ser-Thr/Tyr_kinase_cat_dom"/>
</dbReference>
<dbReference type="InterPro" id="IPR008266">
    <property type="entry name" value="Tyr_kinase_AS"/>
</dbReference>
<dbReference type="PANTHER" id="PTHR24416:SF631">
    <property type="entry name" value="SERINE_THREONINE_TYROSINE KINASE 1"/>
    <property type="match status" value="1"/>
</dbReference>
<dbReference type="PANTHER" id="PTHR24416">
    <property type="entry name" value="TYROSINE-PROTEIN KINASE RECEPTOR"/>
    <property type="match status" value="1"/>
</dbReference>
<dbReference type="Pfam" id="PF07714">
    <property type="entry name" value="PK_Tyr_Ser-Thr"/>
    <property type="match status" value="1"/>
</dbReference>
<dbReference type="PRINTS" id="PR00109">
    <property type="entry name" value="TYRKINASE"/>
</dbReference>
<dbReference type="SUPFAM" id="SSF56112">
    <property type="entry name" value="Protein kinase-like (PK-like)"/>
    <property type="match status" value="1"/>
</dbReference>
<dbReference type="PROSITE" id="PS50011">
    <property type="entry name" value="PROTEIN_KINASE_DOM"/>
    <property type="match status" value="1"/>
</dbReference>
<dbReference type="PROSITE" id="PS00109">
    <property type="entry name" value="PROTEIN_KINASE_TYR"/>
    <property type="match status" value="1"/>
</dbReference>
<comment type="function">
    <text evidence="1">Probable tyrosine protein-kinase, which has strong transforming capabilities on a variety of cell lines. When overexpressed, it can also induce tumor cell invasion as well as metastasis in distant organs. May act by activating both MAP kinase and phosphatidylinositol 3'-kinases (PI3K) pathways (By similarity).</text>
</comment>
<comment type="catalytic activity">
    <reaction evidence="4">
        <text>L-tyrosyl-[protein] + ATP = O-phospho-L-tyrosyl-[protein] + ADP + H(+)</text>
        <dbReference type="Rhea" id="RHEA:10596"/>
        <dbReference type="Rhea" id="RHEA-COMP:10136"/>
        <dbReference type="Rhea" id="RHEA-COMP:20101"/>
        <dbReference type="ChEBI" id="CHEBI:15378"/>
        <dbReference type="ChEBI" id="CHEBI:30616"/>
        <dbReference type="ChEBI" id="CHEBI:46858"/>
        <dbReference type="ChEBI" id="CHEBI:61978"/>
        <dbReference type="ChEBI" id="CHEBI:456216"/>
        <dbReference type="EC" id="2.7.10.2"/>
    </reaction>
</comment>
<comment type="interaction">
    <interactant intactId="EBI-6424915">
        <id>Q6J9G0</id>
    </interactant>
    <interactant intactId="EBI-373586">
        <id>P49841</id>
        <label>GSK3B</label>
    </interactant>
    <organismsDiffer>false</organismsDiffer>
    <experiments>2</experiments>
</comment>
<comment type="interaction">
    <interactant intactId="EBI-6424915">
        <id>Q6J9G0</id>
    </interactant>
    <interactant intactId="EBI-352572">
        <id>P08238</id>
        <label>HSP90AB1</label>
    </interactant>
    <organismsDiffer>false</organismsDiffer>
    <experiments>3</experiments>
</comment>
<comment type="subcellular location">
    <subcellularLocation>
        <location evidence="13">Membrane</location>
        <topology evidence="13">Single-pass membrane protein</topology>
    </subcellularLocation>
</comment>
<comment type="tissue specificity">
    <text evidence="5 7 9">Widely expressed. Highly expressed in brain, placenta and prostate. Expressed in tumor cells such as hepatoma cells L-02, cervix carcinoma cells HeLa, ovary cancer cells Ho8910 and chronic myelogenous leukemia cells K-562, but not in other tumor cells such as epidermoid carcinoma (A-431). Undetectable in most normal lung tissues, widely expressed in lung cancers.</text>
</comment>
<comment type="similarity">
    <text evidence="3">Belongs to the protein kinase superfamily. Tyr protein kinase family.</text>
</comment>
<organism>
    <name type="scientific">Homo sapiens</name>
    <name type="common">Human</name>
    <dbReference type="NCBI Taxonomy" id="9606"/>
    <lineage>
        <taxon>Eukaryota</taxon>
        <taxon>Metazoa</taxon>
        <taxon>Chordata</taxon>
        <taxon>Craniata</taxon>
        <taxon>Vertebrata</taxon>
        <taxon>Euteleostomi</taxon>
        <taxon>Mammalia</taxon>
        <taxon>Eutheria</taxon>
        <taxon>Euarchontoglires</taxon>
        <taxon>Primates</taxon>
        <taxon>Haplorrhini</taxon>
        <taxon>Catarrhini</taxon>
        <taxon>Hominidae</taxon>
        <taxon>Homo</taxon>
    </lineage>
</organism>
<gene>
    <name type="primary">STYK1</name>
    <name type="synonym">NOK</name>
</gene>
<reference key="1">
    <citation type="journal article" date="2003" name="Mol. Biol. Rep.">
        <title>Isolation and characterization of a human putative receptor protein kinase cDNA STYK1.</title>
        <authorList>
            <person name="Ye X."/>
            <person name="Ji C."/>
            <person name="Huang Q."/>
            <person name="Cheng C."/>
            <person name="Tang R."/>
            <person name="Xu J."/>
            <person name="Zeng L."/>
            <person name="Dai J."/>
            <person name="Wu Q."/>
            <person name="Gu S."/>
            <person name="Xie Y."/>
            <person name="Mao Y."/>
        </authorList>
    </citation>
    <scope>NUCLEOTIDE SEQUENCE [MRNA]</scope>
    <scope>TISSUE SPECIFICITY</scope>
    <scope>VARIANT GLY-204</scope>
    <source>
        <tissue>Fetal brain</tissue>
    </source>
</reference>
<reference key="2">
    <citation type="journal article" date="2004" name="Cancer Res.">
        <title>A novel protein tyrosine kinase NOK that shares homology with platelet-derived growth factor/fibroblast growth factor receptors induces tumorigenesis and metastasis in nude mice.</title>
        <authorList>
            <person name="Liu L."/>
            <person name="Yu X.-Z."/>
            <person name="Li T.-S."/>
            <person name="Song L.-X."/>
            <person name="Chen P.-L."/>
            <person name="Suo T.-L."/>
            <person name="Li Y.-H."/>
            <person name="Wang S.-D."/>
            <person name="Chen Y."/>
            <person name="Ren Y.-M."/>
            <person name="Zhang S.-P."/>
            <person name="Chang Z.-J."/>
            <person name="Fu X.-Y."/>
        </authorList>
    </citation>
    <scope>NUCLEOTIDE SEQUENCE [MRNA]</scope>
    <scope>TISSUE SPECIFICITY</scope>
    <source>
        <tissue>Amygdala</tissue>
    </source>
</reference>
<reference key="3">
    <citation type="journal article" date="2004" name="Nat. Genet.">
        <title>Complete sequencing and characterization of 21,243 full-length human cDNAs.</title>
        <authorList>
            <person name="Ota T."/>
            <person name="Suzuki Y."/>
            <person name="Nishikawa T."/>
            <person name="Otsuki T."/>
            <person name="Sugiyama T."/>
            <person name="Irie R."/>
            <person name="Wakamatsu A."/>
            <person name="Hayashi K."/>
            <person name="Sato H."/>
            <person name="Nagai K."/>
            <person name="Kimura K."/>
            <person name="Makita H."/>
            <person name="Sekine M."/>
            <person name="Obayashi M."/>
            <person name="Nishi T."/>
            <person name="Shibahara T."/>
            <person name="Tanaka T."/>
            <person name="Ishii S."/>
            <person name="Yamamoto J."/>
            <person name="Saito K."/>
            <person name="Kawai Y."/>
            <person name="Isono Y."/>
            <person name="Nakamura Y."/>
            <person name="Nagahari K."/>
            <person name="Murakami K."/>
            <person name="Yasuda T."/>
            <person name="Iwayanagi T."/>
            <person name="Wagatsuma M."/>
            <person name="Shiratori A."/>
            <person name="Sudo H."/>
            <person name="Hosoiri T."/>
            <person name="Kaku Y."/>
            <person name="Kodaira H."/>
            <person name="Kondo H."/>
            <person name="Sugawara M."/>
            <person name="Takahashi M."/>
            <person name="Kanda K."/>
            <person name="Yokoi T."/>
            <person name="Furuya T."/>
            <person name="Kikkawa E."/>
            <person name="Omura Y."/>
            <person name="Abe K."/>
            <person name="Kamihara K."/>
            <person name="Katsuta N."/>
            <person name="Sato K."/>
            <person name="Tanikawa M."/>
            <person name="Yamazaki M."/>
            <person name="Ninomiya K."/>
            <person name="Ishibashi T."/>
            <person name="Yamashita H."/>
            <person name="Murakawa K."/>
            <person name="Fujimori K."/>
            <person name="Tanai H."/>
            <person name="Kimata M."/>
            <person name="Watanabe M."/>
            <person name="Hiraoka S."/>
            <person name="Chiba Y."/>
            <person name="Ishida S."/>
            <person name="Ono Y."/>
            <person name="Takiguchi S."/>
            <person name="Watanabe S."/>
            <person name="Yosida M."/>
            <person name="Hotuta T."/>
            <person name="Kusano J."/>
            <person name="Kanehori K."/>
            <person name="Takahashi-Fujii A."/>
            <person name="Hara H."/>
            <person name="Tanase T.-O."/>
            <person name="Nomura Y."/>
            <person name="Togiya S."/>
            <person name="Komai F."/>
            <person name="Hara R."/>
            <person name="Takeuchi K."/>
            <person name="Arita M."/>
            <person name="Imose N."/>
            <person name="Musashino K."/>
            <person name="Yuuki H."/>
            <person name="Oshima A."/>
            <person name="Sasaki N."/>
            <person name="Aotsuka S."/>
            <person name="Yoshikawa Y."/>
            <person name="Matsunawa H."/>
            <person name="Ichihara T."/>
            <person name="Shiohata N."/>
            <person name="Sano S."/>
            <person name="Moriya S."/>
            <person name="Momiyama H."/>
            <person name="Satoh N."/>
            <person name="Takami S."/>
            <person name="Terashima Y."/>
            <person name="Suzuki O."/>
            <person name="Nakagawa S."/>
            <person name="Senoh A."/>
            <person name="Mizoguchi H."/>
            <person name="Goto Y."/>
            <person name="Shimizu F."/>
            <person name="Wakebe H."/>
            <person name="Hishigaki H."/>
            <person name="Watanabe T."/>
            <person name="Sugiyama A."/>
            <person name="Takemoto M."/>
            <person name="Kawakami B."/>
            <person name="Yamazaki M."/>
            <person name="Watanabe K."/>
            <person name="Kumagai A."/>
            <person name="Itakura S."/>
            <person name="Fukuzumi Y."/>
            <person name="Fujimori Y."/>
            <person name="Komiyama M."/>
            <person name="Tashiro H."/>
            <person name="Tanigami A."/>
            <person name="Fujiwara T."/>
            <person name="Ono T."/>
            <person name="Yamada K."/>
            <person name="Fujii Y."/>
            <person name="Ozaki K."/>
            <person name="Hirao M."/>
            <person name="Ohmori Y."/>
            <person name="Kawabata A."/>
            <person name="Hikiji T."/>
            <person name="Kobatake N."/>
            <person name="Inagaki H."/>
            <person name="Ikema Y."/>
            <person name="Okamoto S."/>
            <person name="Okitani R."/>
            <person name="Kawakami T."/>
            <person name="Noguchi S."/>
            <person name="Itoh T."/>
            <person name="Shigeta K."/>
            <person name="Senba T."/>
            <person name="Matsumura K."/>
            <person name="Nakajima Y."/>
            <person name="Mizuno T."/>
            <person name="Morinaga M."/>
            <person name="Sasaki M."/>
            <person name="Togashi T."/>
            <person name="Oyama M."/>
            <person name="Hata H."/>
            <person name="Watanabe M."/>
            <person name="Komatsu T."/>
            <person name="Mizushima-Sugano J."/>
            <person name="Satoh T."/>
            <person name="Shirai Y."/>
            <person name="Takahashi Y."/>
            <person name="Nakagawa K."/>
            <person name="Okumura K."/>
            <person name="Nagase T."/>
            <person name="Nomura N."/>
            <person name="Kikuchi H."/>
            <person name="Masuho Y."/>
            <person name="Yamashita R."/>
            <person name="Nakai K."/>
            <person name="Yada T."/>
            <person name="Nakamura Y."/>
            <person name="Ohara O."/>
            <person name="Isogai T."/>
            <person name="Sugano S."/>
        </authorList>
    </citation>
    <scope>NUCLEOTIDE SEQUENCE [LARGE SCALE MRNA]</scope>
    <scope>VARIANT GLY-204</scope>
    <source>
        <tissue>Hippocampus</tissue>
    </source>
</reference>
<reference key="4">
    <citation type="journal article" date="2007" name="BMC Genomics">
        <title>The full-ORF clone resource of the German cDNA consortium.</title>
        <authorList>
            <person name="Bechtel S."/>
            <person name="Rosenfelder H."/>
            <person name="Duda A."/>
            <person name="Schmidt C.P."/>
            <person name="Ernst U."/>
            <person name="Wellenreuther R."/>
            <person name="Mehrle A."/>
            <person name="Schuster C."/>
            <person name="Bahr A."/>
            <person name="Bloecker H."/>
            <person name="Heubner D."/>
            <person name="Hoerlein A."/>
            <person name="Michel G."/>
            <person name="Wedler H."/>
            <person name="Koehrer K."/>
            <person name="Ottenwaelder B."/>
            <person name="Poustka A."/>
            <person name="Wiemann S."/>
            <person name="Schupp I."/>
        </authorList>
    </citation>
    <scope>NUCLEOTIDE SEQUENCE [LARGE SCALE MRNA]</scope>
    <scope>VARIANT GLY-204</scope>
    <source>
        <tissue>Amygdala</tissue>
    </source>
</reference>
<reference key="5">
    <citation type="journal article" date="2006" name="Nature">
        <title>The finished DNA sequence of human chromosome 12.</title>
        <authorList>
            <person name="Scherer S.E."/>
            <person name="Muzny D.M."/>
            <person name="Buhay C.J."/>
            <person name="Chen R."/>
            <person name="Cree A."/>
            <person name="Ding Y."/>
            <person name="Dugan-Rocha S."/>
            <person name="Gill R."/>
            <person name="Gunaratne P."/>
            <person name="Harris R.A."/>
            <person name="Hawes A.C."/>
            <person name="Hernandez J."/>
            <person name="Hodgson A.V."/>
            <person name="Hume J."/>
            <person name="Jackson A."/>
            <person name="Khan Z.M."/>
            <person name="Kovar-Smith C."/>
            <person name="Lewis L.R."/>
            <person name="Lozado R.J."/>
            <person name="Metzker M.L."/>
            <person name="Milosavljevic A."/>
            <person name="Miner G.R."/>
            <person name="Montgomery K.T."/>
            <person name="Morgan M.B."/>
            <person name="Nazareth L.V."/>
            <person name="Scott G."/>
            <person name="Sodergren E."/>
            <person name="Song X.-Z."/>
            <person name="Steffen D."/>
            <person name="Lovering R.C."/>
            <person name="Wheeler D.A."/>
            <person name="Worley K.C."/>
            <person name="Yuan Y."/>
            <person name="Zhang Z."/>
            <person name="Adams C.Q."/>
            <person name="Ansari-Lari M.A."/>
            <person name="Ayele M."/>
            <person name="Brown M.J."/>
            <person name="Chen G."/>
            <person name="Chen Z."/>
            <person name="Clerc-Blankenburg K.P."/>
            <person name="Davis C."/>
            <person name="Delgado O."/>
            <person name="Dinh H.H."/>
            <person name="Draper H."/>
            <person name="Gonzalez-Garay M.L."/>
            <person name="Havlak P."/>
            <person name="Jackson L.R."/>
            <person name="Jacob L.S."/>
            <person name="Kelly S.H."/>
            <person name="Li L."/>
            <person name="Li Z."/>
            <person name="Liu J."/>
            <person name="Liu W."/>
            <person name="Lu J."/>
            <person name="Maheshwari M."/>
            <person name="Nguyen B.-V."/>
            <person name="Okwuonu G.O."/>
            <person name="Pasternak S."/>
            <person name="Perez L.M."/>
            <person name="Plopper F.J.H."/>
            <person name="Santibanez J."/>
            <person name="Shen H."/>
            <person name="Tabor P.E."/>
            <person name="Verduzco D."/>
            <person name="Waldron L."/>
            <person name="Wang Q."/>
            <person name="Williams G.A."/>
            <person name="Zhang J."/>
            <person name="Zhou J."/>
            <person name="Allen C.C."/>
            <person name="Amin A.G."/>
            <person name="Anyalebechi V."/>
            <person name="Bailey M."/>
            <person name="Barbaria J.A."/>
            <person name="Bimage K.E."/>
            <person name="Bryant N.P."/>
            <person name="Burch P.E."/>
            <person name="Burkett C.E."/>
            <person name="Burrell K.L."/>
            <person name="Calderon E."/>
            <person name="Cardenas V."/>
            <person name="Carter K."/>
            <person name="Casias K."/>
            <person name="Cavazos I."/>
            <person name="Cavazos S.R."/>
            <person name="Ceasar H."/>
            <person name="Chacko J."/>
            <person name="Chan S.N."/>
            <person name="Chavez D."/>
            <person name="Christopoulos C."/>
            <person name="Chu J."/>
            <person name="Cockrell R."/>
            <person name="Cox C.D."/>
            <person name="Dang M."/>
            <person name="Dathorne S.R."/>
            <person name="David R."/>
            <person name="Davis C.M."/>
            <person name="Davy-Carroll L."/>
            <person name="Deshazo D.R."/>
            <person name="Donlin J.E."/>
            <person name="D'Souza L."/>
            <person name="Eaves K.A."/>
            <person name="Egan A."/>
            <person name="Emery-Cohen A.J."/>
            <person name="Escotto M."/>
            <person name="Flagg N."/>
            <person name="Forbes L.D."/>
            <person name="Gabisi A.M."/>
            <person name="Garza M."/>
            <person name="Hamilton C."/>
            <person name="Henderson N."/>
            <person name="Hernandez O."/>
            <person name="Hines S."/>
            <person name="Hogues M.E."/>
            <person name="Huang M."/>
            <person name="Idlebird D.G."/>
            <person name="Johnson R."/>
            <person name="Jolivet A."/>
            <person name="Jones S."/>
            <person name="Kagan R."/>
            <person name="King L.M."/>
            <person name="Leal B."/>
            <person name="Lebow H."/>
            <person name="Lee S."/>
            <person name="LeVan J.M."/>
            <person name="Lewis L.C."/>
            <person name="London P."/>
            <person name="Lorensuhewa L.M."/>
            <person name="Loulseged H."/>
            <person name="Lovett D.A."/>
            <person name="Lucier A."/>
            <person name="Lucier R.L."/>
            <person name="Ma J."/>
            <person name="Madu R.C."/>
            <person name="Mapua P."/>
            <person name="Martindale A.D."/>
            <person name="Martinez E."/>
            <person name="Massey E."/>
            <person name="Mawhiney S."/>
            <person name="Meador M.G."/>
            <person name="Mendez S."/>
            <person name="Mercado C."/>
            <person name="Mercado I.C."/>
            <person name="Merritt C.E."/>
            <person name="Miner Z.L."/>
            <person name="Minja E."/>
            <person name="Mitchell T."/>
            <person name="Mohabbat F."/>
            <person name="Mohabbat K."/>
            <person name="Montgomery B."/>
            <person name="Moore N."/>
            <person name="Morris S."/>
            <person name="Munidasa M."/>
            <person name="Ngo R.N."/>
            <person name="Nguyen N.B."/>
            <person name="Nickerson E."/>
            <person name="Nwaokelemeh O.O."/>
            <person name="Nwokenkwo S."/>
            <person name="Obregon M."/>
            <person name="Oguh M."/>
            <person name="Oragunye N."/>
            <person name="Oviedo R.J."/>
            <person name="Parish B.J."/>
            <person name="Parker D.N."/>
            <person name="Parrish J."/>
            <person name="Parks K.L."/>
            <person name="Paul H.A."/>
            <person name="Payton B.A."/>
            <person name="Perez A."/>
            <person name="Perrin W."/>
            <person name="Pickens A."/>
            <person name="Primus E.L."/>
            <person name="Pu L.-L."/>
            <person name="Puazo M."/>
            <person name="Quiles M.M."/>
            <person name="Quiroz J.B."/>
            <person name="Rabata D."/>
            <person name="Reeves K."/>
            <person name="Ruiz S.J."/>
            <person name="Shao H."/>
            <person name="Sisson I."/>
            <person name="Sonaike T."/>
            <person name="Sorelle R.P."/>
            <person name="Sutton A.E."/>
            <person name="Svatek A.F."/>
            <person name="Svetz L.A."/>
            <person name="Tamerisa K.S."/>
            <person name="Taylor T.R."/>
            <person name="Teague B."/>
            <person name="Thomas N."/>
            <person name="Thorn R.D."/>
            <person name="Trejos Z.Y."/>
            <person name="Trevino B.K."/>
            <person name="Ukegbu O.N."/>
            <person name="Urban J.B."/>
            <person name="Vasquez L.I."/>
            <person name="Vera V.A."/>
            <person name="Villasana D.M."/>
            <person name="Wang L."/>
            <person name="Ward-Moore S."/>
            <person name="Warren J.T."/>
            <person name="Wei X."/>
            <person name="White F."/>
            <person name="Williamson A.L."/>
            <person name="Wleczyk R."/>
            <person name="Wooden H.S."/>
            <person name="Wooden S.H."/>
            <person name="Yen J."/>
            <person name="Yoon L."/>
            <person name="Yoon V."/>
            <person name="Zorrilla S.E."/>
            <person name="Nelson D."/>
            <person name="Kucherlapati R."/>
            <person name="Weinstock G."/>
            <person name="Gibbs R.A."/>
        </authorList>
    </citation>
    <scope>NUCLEOTIDE SEQUENCE [LARGE SCALE GENOMIC DNA]</scope>
</reference>
<reference key="6">
    <citation type="submission" date="2005-07" db="EMBL/GenBank/DDBJ databases">
        <authorList>
            <person name="Mural R.J."/>
            <person name="Istrail S."/>
            <person name="Sutton G.G."/>
            <person name="Florea L."/>
            <person name="Halpern A.L."/>
            <person name="Mobarry C.M."/>
            <person name="Lippert R."/>
            <person name="Walenz B."/>
            <person name="Shatkay H."/>
            <person name="Dew I."/>
            <person name="Miller J.R."/>
            <person name="Flanigan M.J."/>
            <person name="Edwards N.J."/>
            <person name="Bolanos R."/>
            <person name="Fasulo D."/>
            <person name="Halldorsson B.V."/>
            <person name="Hannenhalli S."/>
            <person name="Turner R."/>
            <person name="Yooseph S."/>
            <person name="Lu F."/>
            <person name="Nusskern D.R."/>
            <person name="Shue B.C."/>
            <person name="Zheng X.H."/>
            <person name="Zhong F."/>
            <person name="Delcher A.L."/>
            <person name="Huson D.H."/>
            <person name="Kravitz S.A."/>
            <person name="Mouchard L."/>
            <person name="Reinert K."/>
            <person name="Remington K.A."/>
            <person name="Clark A.G."/>
            <person name="Waterman M.S."/>
            <person name="Eichler E.E."/>
            <person name="Adams M.D."/>
            <person name="Hunkapiller M.W."/>
            <person name="Myers E.W."/>
            <person name="Venter J.C."/>
        </authorList>
    </citation>
    <scope>NUCLEOTIDE SEQUENCE [LARGE SCALE GENOMIC DNA]</scope>
    <scope>VARIANT GLY-204</scope>
</reference>
<reference key="7">
    <citation type="journal article" date="2004" name="Genome Res.">
        <title>The status, quality, and expansion of the NIH full-length cDNA project: the Mammalian Gene Collection (MGC).</title>
        <authorList>
            <consortium name="The MGC Project Team"/>
        </authorList>
    </citation>
    <scope>NUCLEOTIDE SEQUENCE [LARGE SCALE MRNA]</scope>
    <scope>VARIANT GLY-204</scope>
    <source>
        <tissue>Brain</tissue>
    </source>
</reference>
<reference key="8">
    <citation type="journal article" date="2007" name="Lung Cancer">
        <title>Diagnostic relevance of overexpressed mRNA of novel oncogene with kinase-domain (NOK) in lung cancers.</title>
        <authorList>
            <person name="Amachika T."/>
            <person name="Kobayashi D."/>
            <person name="Moriai R."/>
            <person name="Tsuji N."/>
            <person name="Watanabe N."/>
        </authorList>
    </citation>
    <scope>TISSUE SPECIFICITY</scope>
</reference>
<reference key="9">
    <citation type="journal article" date="2007" name="Nature">
        <title>Patterns of somatic mutation in human cancer genomes.</title>
        <authorList>
            <person name="Greenman C."/>
            <person name="Stephens P."/>
            <person name="Smith R."/>
            <person name="Dalgliesh G.L."/>
            <person name="Hunter C."/>
            <person name="Bignell G."/>
            <person name="Davies H."/>
            <person name="Teague J."/>
            <person name="Butler A."/>
            <person name="Stevens C."/>
            <person name="Edkins S."/>
            <person name="O'Meara S."/>
            <person name="Vastrik I."/>
            <person name="Schmidt E.E."/>
            <person name="Avis T."/>
            <person name="Barthorpe S."/>
            <person name="Bhamra G."/>
            <person name="Buck G."/>
            <person name="Choudhury B."/>
            <person name="Clements J."/>
            <person name="Cole J."/>
            <person name="Dicks E."/>
            <person name="Forbes S."/>
            <person name="Gray K."/>
            <person name="Halliday K."/>
            <person name="Harrison R."/>
            <person name="Hills K."/>
            <person name="Hinton J."/>
            <person name="Jenkinson A."/>
            <person name="Jones D."/>
            <person name="Menzies A."/>
            <person name="Mironenko T."/>
            <person name="Perry J."/>
            <person name="Raine K."/>
            <person name="Richardson D."/>
            <person name="Shepherd R."/>
            <person name="Small A."/>
            <person name="Tofts C."/>
            <person name="Varian J."/>
            <person name="Webb T."/>
            <person name="West S."/>
            <person name="Widaa S."/>
            <person name="Yates A."/>
            <person name="Cahill D.P."/>
            <person name="Louis D.N."/>
            <person name="Goldstraw P."/>
            <person name="Nicholson A.G."/>
            <person name="Brasseur F."/>
            <person name="Looijenga L."/>
            <person name="Weber B.L."/>
            <person name="Chiew Y.-E."/>
            <person name="DeFazio A."/>
            <person name="Greaves M.F."/>
            <person name="Green A.R."/>
            <person name="Campbell P."/>
            <person name="Birney E."/>
            <person name="Easton D.F."/>
            <person name="Chenevix-Trench G."/>
            <person name="Tan M.-H."/>
            <person name="Khoo S.K."/>
            <person name="Teh B.T."/>
            <person name="Yuen S.T."/>
            <person name="Leung S.Y."/>
            <person name="Wooster R."/>
            <person name="Futreal P.A."/>
            <person name="Stratton M.R."/>
        </authorList>
    </citation>
    <scope>VARIANTS [LARGE SCALE ANALYSIS] GLY-204; TRP-210; SER-237; HIS-379; ILE-395 AND LEU-400</scope>
</reference>
<keyword id="KW-0067">ATP-binding</keyword>
<keyword id="KW-0418">Kinase</keyword>
<keyword id="KW-0472">Membrane</keyword>
<keyword id="KW-0547">Nucleotide-binding</keyword>
<keyword id="KW-1267">Proteomics identification</keyword>
<keyword id="KW-0656">Proto-oncogene</keyword>
<keyword id="KW-1185">Reference proteome</keyword>
<keyword id="KW-0808">Transferase</keyword>
<keyword id="KW-0812">Transmembrane</keyword>
<keyword id="KW-1133">Transmembrane helix</keyword>
<keyword id="KW-0829">Tyrosine-protein kinase</keyword>
<name>STYK1_HUMAN</name>
<proteinExistence type="evidence at protein level"/>